<protein>
    <recommendedName>
        <fullName evidence="1">Glycosylated lysosomal membrane protein</fullName>
    </recommendedName>
    <alternativeName>
        <fullName evidence="1">Lysosomal protein NCU-G1</fullName>
    </alternativeName>
</protein>
<feature type="signal peptide" evidence="3">
    <location>
        <begin position="1"/>
        <end position="35"/>
    </location>
</feature>
<feature type="chain" id="PRO_0000284486" description="Glycosylated lysosomal membrane protein" evidence="4">
    <location>
        <begin position="36"/>
        <end position="404"/>
    </location>
</feature>
<feature type="topological domain" description="Lumenal" evidence="3">
    <location>
        <begin position="36"/>
        <end position="371"/>
    </location>
</feature>
<feature type="transmembrane region" description="Helical" evidence="3">
    <location>
        <begin position="372"/>
        <end position="392"/>
    </location>
</feature>
<feature type="topological domain" description="Cytoplasmic" evidence="3">
    <location>
        <begin position="393"/>
        <end position="404"/>
    </location>
</feature>
<feature type="short sequence motif" description="Lysosomal targeting motif" evidence="2">
    <location>
        <begin position="400"/>
        <end position="404"/>
    </location>
</feature>
<feature type="glycosylation site" description="N-linked (GlcNAc...) asparagine" evidence="3">
    <location>
        <position position="65"/>
    </location>
</feature>
<feature type="glycosylation site" description="N-linked (GlcNAc...) asparagine" evidence="3">
    <location>
        <position position="134"/>
    </location>
</feature>
<feature type="glycosylation site" description="N-linked (GlcNAc...) asparagine" evidence="3">
    <location>
        <position position="159"/>
    </location>
</feature>
<feature type="glycosylation site" description="N-linked (GlcNAc...) asparagine" evidence="3">
    <location>
        <position position="186"/>
    </location>
</feature>
<feature type="glycosylation site" description="N-linked (GlcNAc...) asparagine" evidence="3">
    <location>
        <position position="229"/>
    </location>
</feature>
<dbReference type="EMBL" id="CR858543">
    <property type="protein sequence ID" value="CAH90770.1"/>
    <property type="molecule type" value="Transcribed_RNA"/>
</dbReference>
<dbReference type="SMR" id="Q5RBU0"/>
<dbReference type="FunCoup" id="Q5RBU0">
    <property type="interactions" value="1246"/>
</dbReference>
<dbReference type="STRING" id="9601.ENSPPYP00000000836"/>
<dbReference type="GlyCosmos" id="Q5RBU0">
    <property type="glycosylation" value="5 sites, No reported glycans"/>
</dbReference>
<dbReference type="InParanoid" id="Q5RBU0"/>
<dbReference type="Proteomes" id="UP000001595">
    <property type="component" value="Unplaced"/>
</dbReference>
<dbReference type="GO" id="GO:0005765">
    <property type="term" value="C:lysosomal membrane"/>
    <property type="evidence" value="ECO:0007669"/>
    <property type="project" value="UniProtKB-SubCell"/>
</dbReference>
<dbReference type="GO" id="GO:0005764">
    <property type="term" value="C:lysosome"/>
    <property type="evidence" value="ECO:0000250"/>
    <property type="project" value="UniProtKB"/>
</dbReference>
<dbReference type="GO" id="GO:0016020">
    <property type="term" value="C:membrane"/>
    <property type="evidence" value="ECO:0000250"/>
    <property type="project" value="UniProtKB"/>
</dbReference>
<dbReference type="GO" id="GO:0061462">
    <property type="term" value="P:protein localization to lysosome"/>
    <property type="evidence" value="ECO:0000250"/>
    <property type="project" value="UniProtKB"/>
</dbReference>
<dbReference type="GO" id="GO:0050821">
    <property type="term" value="P:protein stabilization"/>
    <property type="evidence" value="ECO:0000250"/>
    <property type="project" value="UniProtKB"/>
</dbReference>
<dbReference type="InterPro" id="IPR029382">
    <property type="entry name" value="NCU-G1"/>
</dbReference>
<dbReference type="PANTHER" id="PTHR31981">
    <property type="entry name" value="GLYCOSYLATED LYSOSOMAL MEMBRANE PROTEIN"/>
    <property type="match status" value="1"/>
</dbReference>
<dbReference type="PANTHER" id="PTHR31981:SF1">
    <property type="entry name" value="GLYCOSYLATED LYSOSOMAL MEMBRANE PROTEIN"/>
    <property type="match status" value="1"/>
</dbReference>
<dbReference type="Pfam" id="PF15065">
    <property type="entry name" value="NCU-G1"/>
    <property type="match status" value="1"/>
</dbReference>
<sequence>MRGSVERGWGWGHCASSPLLLWTLLLFAAPFGLLGEKTRQLSLEVIPNWLGPLQNLLHIRAVGTNSTLHYVWSSLGPLAVVMVATNTPHSTLSVNWSRLLSPEPDGGLMVLPKDSIQFSSALVFTRLLEFDSTNVSNTAAKPPGRPYPPYSLADFSWNNITDSLPATLSATFQGHPMNDPTRTFANGSLAFRVQAFSRSSRPAQPPRLLHTADTCQLEVALVGASPRGNHSLFGLEVATLGQGPDCPSMQEQHSIDDEYAPAVFQLDQLLWGSLPAGFAQWRPVAYSQKPGGRESALPCQASPLHPALAYSLPQSPIVRAFFGSQNNFCAFNLTFGASTGPGYWDQHYLSWNAPGCGLPSSGRLVPTSPGHHGSALGAPGLMLLGGGLVLLLHHRKYSEYQSIN</sequence>
<accession>Q5RBU0</accession>
<proteinExistence type="inferred from homology"/>
<name>GLMP_PONAB</name>
<evidence type="ECO:0000250" key="1">
    <source>
        <dbReference type="UniProtKB" id="Q8WWB7"/>
    </source>
</evidence>
<evidence type="ECO:0000250" key="2">
    <source>
        <dbReference type="UniProtKB" id="Q9JHJ3"/>
    </source>
</evidence>
<evidence type="ECO:0000255" key="3"/>
<evidence type="ECO:0000305" key="4"/>
<gene>
    <name evidence="1" type="primary">GLMP</name>
</gene>
<reference key="1">
    <citation type="submission" date="2004-11" db="EMBL/GenBank/DDBJ databases">
        <authorList>
            <consortium name="The German cDNA consortium"/>
        </authorList>
    </citation>
    <scope>NUCLEOTIDE SEQUENCE [LARGE SCALE MRNA]</scope>
    <source>
        <tissue>Kidney</tissue>
    </source>
</reference>
<comment type="function">
    <text evidence="2">Required to protect lysosomal transporter MFSD1 from lysosomal proteolysis and for MFSD1 lysosomal localization.</text>
</comment>
<comment type="subunit">
    <text evidence="2">Interacts (via lumenal domain) with lysosomal protein MFSD1; the interaction starts while both proteins are still in the endoplasmic reticulum and is required for stabilization of MFSD1 in lysosomes but has no direct effect on its targeting to lysosomes or transporter activity.</text>
</comment>
<comment type="subcellular location">
    <subcellularLocation>
        <location evidence="2">Lysosome membrane</location>
        <topology evidence="3">Single-pass type I membrane protein</topology>
        <orientation evidence="4">Lumenal side</orientation>
    </subcellularLocation>
</comment>
<comment type="PTM">
    <text evidence="2">Highly N-glycosylated. N-glycosylation is essential for GLMP stability and for MFSD1 lysosomal localization.</text>
</comment>
<comment type="similarity">
    <text evidence="4">Belongs to the GLMP family.</text>
</comment>
<keyword id="KW-0325">Glycoprotein</keyword>
<keyword id="KW-0458">Lysosome</keyword>
<keyword id="KW-0472">Membrane</keyword>
<keyword id="KW-1185">Reference proteome</keyword>
<keyword id="KW-0732">Signal</keyword>
<keyword id="KW-0812">Transmembrane</keyword>
<keyword id="KW-1133">Transmembrane helix</keyword>
<organism>
    <name type="scientific">Pongo abelii</name>
    <name type="common">Sumatran orangutan</name>
    <name type="synonym">Pongo pygmaeus abelii</name>
    <dbReference type="NCBI Taxonomy" id="9601"/>
    <lineage>
        <taxon>Eukaryota</taxon>
        <taxon>Metazoa</taxon>
        <taxon>Chordata</taxon>
        <taxon>Craniata</taxon>
        <taxon>Vertebrata</taxon>
        <taxon>Euteleostomi</taxon>
        <taxon>Mammalia</taxon>
        <taxon>Eutheria</taxon>
        <taxon>Euarchontoglires</taxon>
        <taxon>Primates</taxon>
        <taxon>Haplorrhini</taxon>
        <taxon>Catarrhini</taxon>
        <taxon>Hominidae</taxon>
        <taxon>Pongo</taxon>
    </lineage>
</organism>